<keyword id="KW-0020">Allergen</keyword>
<keyword id="KW-0204">Cytolysis</keyword>
<keyword id="KW-0903">Direct protein sequencing</keyword>
<keyword id="KW-1015">Disulfide bond</keyword>
<keyword id="KW-0325">Glycoprotein</keyword>
<keyword id="KW-0354">Hemolysis</keyword>
<keyword id="KW-0378">Hydrolase</keyword>
<keyword id="KW-0442">Lipid degradation</keyword>
<keyword id="KW-0443">Lipid metabolism</keyword>
<keyword id="KW-0964">Secreted</keyword>
<sequence length="298" mass="32934">GSKCPFSDDTVAMVIVTRENRNRDFYTLQTLRNHDEFKKKAITRPVVFITHGFTSSATVESFVDLQTAILEXXXXKVTVSDWRVAACNRTTGLLYYVTAVSNTRLVGRYIATVTKKLVTDYNVSMADIRLIGHSLGAHVSGFAGKEVQKLKLEKYSEIIGLDPAGPSFESNDCAERLCKTDAHYVQIIHTSKKFGIEKSIGHVDFYVNQGNNQPGCGIIPLKDVCSHSRAITYMTECIKRECCLIGIPQSKSSKSISSCTRQECVCVGLKAKSYPNTGSFYVPVESTAPFCNNKGKII</sequence>
<protein>
    <recommendedName>
        <fullName evidence="9">Phospholipase A1</fullName>
        <shortName evidence="9">PLA1</shortName>
        <ecNumber evidence="3">3.1.1.32</ecNumber>
    </recommendedName>
    <allergenName evidence="8">Ves s 1</allergenName>
</protein>
<organism>
    <name type="scientific">Vespula squamosa</name>
    <name type="common">Southern yellow jacket</name>
    <name type="synonym">Wasp</name>
    <dbReference type="NCBI Taxonomy" id="30214"/>
    <lineage>
        <taxon>Eukaryota</taxon>
        <taxon>Metazoa</taxon>
        <taxon>Ecdysozoa</taxon>
        <taxon>Arthropoda</taxon>
        <taxon>Hexapoda</taxon>
        <taxon>Insecta</taxon>
        <taxon>Pterygota</taxon>
        <taxon>Neoptera</taxon>
        <taxon>Endopterygota</taxon>
        <taxon>Hymenoptera</taxon>
        <taxon>Apocrita</taxon>
        <taxon>Aculeata</taxon>
        <taxon>Vespoidea</taxon>
        <taxon>Vespidae</taxon>
        <taxon>Vespinae</taxon>
        <taxon>Vespula</taxon>
    </lineage>
</organism>
<proteinExistence type="evidence at protein level"/>
<name>PA1_VESSQ</name>
<reference key="1">
    <citation type="journal article" date="2005" name="J. Allergy Clin. Immunol.">
        <title>Sol i 1, the phospholipase allergen of imported fire ant venom.</title>
        <authorList>
            <person name="Hoffman D.R."/>
            <person name="Sakell R.H."/>
            <person name="Schmidt M."/>
        </authorList>
    </citation>
    <scope>PROTEIN SEQUENCE</scope>
    <scope>SUBCELLULAR LOCATION</scope>
    <source>
        <tissue>Venom</tissue>
    </source>
</reference>
<comment type="function">
    <text evidence="3 4">Catalyzes the hydrolysis of phosphatidylcholine with phospholipase A1 activity (By similarity). May act as an allergen and induce hemolytic activity (By similarity).</text>
</comment>
<comment type="catalytic activity">
    <reaction evidence="3">
        <text>a 1,2-diacyl-sn-glycero-3-phosphocholine + H2O = a 2-acyl-sn-glycero-3-phosphocholine + a fatty acid + H(+)</text>
        <dbReference type="Rhea" id="RHEA:18689"/>
        <dbReference type="ChEBI" id="CHEBI:15377"/>
        <dbReference type="ChEBI" id="CHEBI:15378"/>
        <dbReference type="ChEBI" id="CHEBI:28868"/>
        <dbReference type="ChEBI" id="CHEBI:57643"/>
        <dbReference type="ChEBI" id="CHEBI:57875"/>
        <dbReference type="EC" id="3.1.1.32"/>
    </reaction>
</comment>
<comment type="subcellular location">
    <subcellularLocation>
        <location evidence="7">Secreted</location>
    </subcellularLocation>
</comment>
<comment type="tissue specificity">
    <text evidence="10">Expressed by the venom gland.</text>
</comment>
<comment type="allergen">
    <text evidence="2">Causes an allergic reaction in human. Binds to IgE.</text>
</comment>
<comment type="similarity">
    <text evidence="9">Belongs to the AB hydrolase superfamily. Lipase family.</text>
</comment>
<accession>P0CH86</accession>
<dbReference type="EC" id="3.1.1.32" evidence="3"/>
<dbReference type="Allergome" id="3518">
    <property type="allergen name" value="Ves s 1.0101"/>
</dbReference>
<dbReference type="Allergome" id="665">
    <property type="allergen name" value="Ves s 1"/>
</dbReference>
<dbReference type="ESTHER" id="vessq-pa1">
    <property type="family name" value="Insect_Phospholipase"/>
</dbReference>
<dbReference type="GO" id="GO:0005615">
    <property type="term" value="C:extracellular space"/>
    <property type="evidence" value="ECO:0007669"/>
    <property type="project" value="TreeGrafter"/>
</dbReference>
<dbReference type="GO" id="GO:0008970">
    <property type="term" value="F:phospholipase A1 activity"/>
    <property type="evidence" value="ECO:0007669"/>
    <property type="project" value="UniProtKB-EC"/>
</dbReference>
<dbReference type="GO" id="GO:0031640">
    <property type="term" value="P:killing of cells of another organism"/>
    <property type="evidence" value="ECO:0007669"/>
    <property type="project" value="UniProtKB-KW"/>
</dbReference>
<dbReference type="GO" id="GO:0016042">
    <property type="term" value="P:lipid catabolic process"/>
    <property type="evidence" value="ECO:0007669"/>
    <property type="project" value="UniProtKB-KW"/>
</dbReference>
<dbReference type="Gene3D" id="3.40.50.1820">
    <property type="entry name" value="alpha/beta hydrolase"/>
    <property type="match status" value="1"/>
</dbReference>
<dbReference type="InterPro" id="IPR029058">
    <property type="entry name" value="AB_hydrolase_fold"/>
</dbReference>
<dbReference type="InterPro" id="IPR002334">
    <property type="entry name" value="Allerg_PlipaseA1"/>
</dbReference>
<dbReference type="InterPro" id="IPR013818">
    <property type="entry name" value="Lipase"/>
</dbReference>
<dbReference type="InterPro" id="IPR000734">
    <property type="entry name" value="TAG_lipase"/>
</dbReference>
<dbReference type="PANTHER" id="PTHR11610">
    <property type="entry name" value="LIPASE"/>
    <property type="match status" value="1"/>
</dbReference>
<dbReference type="PANTHER" id="PTHR11610:SF173">
    <property type="entry name" value="LIPASE DOMAIN-CONTAINING PROTEIN-RELATED"/>
    <property type="match status" value="1"/>
</dbReference>
<dbReference type="Pfam" id="PF00151">
    <property type="entry name" value="Lipase"/>
    <property type="match status" value="1"/>
</dbReference>
<dbReference type="PRINTS" id="PR00825">
    <property type="entry name" value="DOLALLERGEN"/>
</dbReference>
<dbReference type="PRINTS" id="PR00821">
    <property type="entry name" value="TAGLIPASE"/>
</dbReference>
<dbReference type="SUPFAM" id="SSF53474">
    <property type="entry name" value="alpha/beta-Hydrolases"/>
    <property type="match status" value="1"/>
</dbReference>
<dbReference type="PROSITE" id="PS00120">
    <property type="entry name" value="LIPASE_SER"/>
    <property type="match status" value="1"/>
</dbReference>
<feature type="chain" id="PRO_0000401921" description="Phospholipase A1" evidence="7">
    <location>
        <begin position="1"/>
        <end position="298"/>
    </location>
</feature>
<feature type="active site" description="Nucleophile" evidence="1">
    <location>
        <position position="134"/>
    </location>
</feature>
<feature type="active site" description="Charge relay system" evidence="6">
    <location>
        <position position="162"/>
    </location>
</feature>
<feature type="active site" description="Charge relay system" evidence="6">
    <location>
        <position position="227"/>
    </location>
</feature>
<feature type="glycosylation site" description="N-linked (GlcNAc...) asparagine" evidence="5">
    <location>
        <position position="88"/>
    </location>
</feature>
<feature type="glycosylation site" description="N-linked (GlcNAc...) asparagine" evidence="5">
    <location>
        <position position="122"/>
    </location>
</feature>
<feature type="disulfide bond" evidence="1">
    <location>
        <begin position="4"/>
        <end position="87"/>
    </location>
</feature>
<feature type="disulfide bond" evidence="1">
    <location>
        <begin position="173"/>
        <end position="178"/>
    </location>
</feature>
<feature type="disulfide bond" evidence="1">
    <location>
        <begin position="216"/>
        <end position="225"/>
    </location>
</feature>
<feature type="disulfide bond" evidence="1">
    <location>
        <begin position="242"/>
        <end position="266"/>
    </location>
</feature>
<feature type="disulfide bond" evidence="1">
    <location>
        <begin position="243"/>
        <end position="291"/>
    </location>
</feature>
<feature type="disulfide bond" evidence="1">
    <location>
        <begin position="259"/>
        <end position="264"/>
    </location>
</feature>
<evidence type="ECO:0000250" key="1">
    <source>
        <dbReference type="UniProtKB" id="A0A0M3KKW3"/>
    </source>
</evidence>
<evidence type="ECO:0000250" key="2">
    <source>
        <dbReference type="UniProtKB" id="A2VBC4"/>
    </source>
</evidence>
<evidence type="ECO:0000250" key="3">
    <source>
        <dbReference type="UniProtKB" id="P0DMB4"/>
    </source>
</evidence>
<evidence type="ECO:0000250" key="4">
    <source>
        <dbReference type="UniProtKB" id="P0DMB7"/>
    </source>
</evidence>
<evidence type="ECO:0000255" key="5"/>
<evidence type="ECO:0000255" key="6">
    <source>
        <dbReference type="PROSITE-ProRule" id="PRU10037"/>
    </source>
</evidence>
<evidence type="ECO:0000269" key="7">
    <source>
    </source>
</evidence>
<evidence type="ECO:0000303" key="8">
    <source>
    </source>
</evidence>
<evidence type="ECO:0000305" key="9"/>
<evidence type="ECO:0000305" key="10">
    <source>
    </source>
</evidence>